<name>GPPA_ECOSE</name>
<proteinExistence type="inferred from homology"/>
<gene>
    <name evidence="1" type="primary">gppA</name>
    <name type="ordered locus">ECSE_4061</name>
</gene>
<evidence type="ECO:0000255" key="1">
    <source>
        <dbReference type="HAMAP-Rule" id="MF_01550"/>
    </source>
</evidence>
<organism>
    <name type="scientific">Escherichia coli (strain SE11)</name>
    <dbReference type="NCBI Taxonomy" id="409438"/>
    <lineage>
        <taxon>Bacteria</taxon>
        <taxon>Pseudomonadati</taxon>
        <taxon>Pseudomonadota</taxon>
        <taxon>Gammaproteobacteria</taxon>
        <taxon>Enterobacterales</taxon>
        <taxon>Enterobacteriaceae</taxon>
        <taxon>Escherichia</taxon>
    </lineage>
</organism>
<keyword id="KW-0378">Hydrolase</keyword>
<dbReference type="EC" id="3.6.1.40" evidence="1"/>
<dbReference type="EMBL" id="AP009240">
    <property type="protein sequence ID" value="BAG79585.1"/>
    <property type="molecule type" value="Genomic_DNA"/>
</dbReference>
<dbReference type="RefSeq" id="WP_001299253.1">
    <property type="nucleotide sequence ID" value="NC_011415.1"/>
</dbReference>
<dbReference type="SMR" id="B6I4B5"/>
<dbReference type="GeneID" id="75204769"/>
<dbReference type="KEGG" id="ecy:ECSE_4061"/>
<dbReference type="HOGENOM" id="CLU_025908_4_0_6"/>
<dbReference type="UniPathway" id="UPA00908">
    <property type="reaction ID" value="UER00885"/>
</dbReference>
<dbReference type="Proteomes" id="UP000008199">
    <property type="component" value="Chromosome"/>
</dbReference>
<dbReference type="GO" id="GO:0008894">
    <property type="term" value="F:guanosine-5'-triphosphate,3'-diphosphate diphosphatase activity"/>
    <property type="evidence" value="ECO:0007669"/>
    <property type="project" value="UniProtKB-UniRule"/>
</dbReference>
<dbReference type="GO" id="GO:0015974">
    <property type="term" value="P:guanosine pentaphosphate catabolic process"/>
    <property type="evidence" value="ECO:0007669"/>
    <property type="project" value="InterPro"/>
</dbReference>
<dbReference type="GO" id="GO:0015970">
    <property type="term" value="P:guanosine tetraphosphate biosynthetic process"/>
    <property type="evidence" value="ECO:0007669"/>
    <property type="project" value="UniProtKB-UniRule"/>
</dbReference>
<dbReference type="GO" id="GO:0015949">
    <property type="term" value="P:nucleobase-containing small molecule interconversion"/>
    <property type="evidence" value="ECO:0007669"/>
    <property type="project" value="TreeGrafter"/>
</dbReference>
<dbReference type="CDD" id="cd24117">
    <property type="entry name" value="ASKHA_NBD_EcGppA-like"/>
    <property type="match status" value="1"/>
</dbReference>
<dbReference type="FunFam" id="1.10.3210.10:FF:000004">
    <property type="entry name" value="Guanosine-5'-triphosphate,3'-diphosphate pyrophosphatase"/>
    <property type="match status" value="1"/>
</dbReference>
<dbReference type="FunFam" id="3.30.420.150:FF:000001">
    <property type="entry name" value="Guanosine-5'-triphosphate,3'-diphosphate pyrophosphatase"/>
    <property type="match status" value="1"/>
</dbReference>
<dbReference type="FunFam" id="3.30.420.40:FF:000023">
    <property type="entry name" value="Guanosine-5'-triphosphate,3'-diphosphate pyrophosphatase"/>
    <property type="match status" value="1"/>
</dbReference>
<dbReference type="Gene3D" id="3.30.420.40">
    <property type="match status" value="1"/>
</dbReference>
<dbReference type="Gene3D" id="3.30.420.150">
    <property type="entry name" value="Exopolyphosphatase. Domain 2"/>
    <property type="match status" value="1"/>
</dbReference>
<dbReference type="Gene3D" id="1.10.3210.10">
    <property type="entry name" value="Hypothetical protein af1432"/>
    <property type="match status" value="1"/>
</dbReference>
<dbReference type="HAMAP" id="MF_01550">
    <property type="entry name" value="GppA"/>
    <property type="match status" value="1"/>
</dbReference>
<dbReference type="InterPro" id="IPR043129">
    <property type="entry name" value="ATPase_NBD"/>
</dbReference>
<dbReference type="InterPro" id="IPR050273">
    <property type="entry name" value="GppA/Ppx_hydrolase"/>
</dbReference>
<dbReference type="InterPro" id="IPR023709">
    <property type="entry name" value="Guo-5TP_3DP_PyrP"/>
</dbReference>
<dbReference type="InterPro" id="IPR048950">
    <property type="entry name" value="Ppx_GppA_C"/>
</dbReference>
<dbReference type="InterPro" id="IPR003695">
    <property type="entry name" value="Ppx_GppA_N"/>
</dbReference>
<dbReference type="InterPro" id="IPR030673">
    <property type="entry name" value="PyroPPase_GppA_Ppx"/>
</dbReference>
<dbReference type="NCBIfam" id="NF008260">
    <property type="entry name" value="PRK11031.1"/>
    <property type="match status" value="1"/>
</dbReference>
<dbReference type="PANTHER" id="PTHR30005">
    <property type="entry name" value="EXOPOLYPHOSPHATASE"/>
    <property type="match status" value="1"/>
</dbReference>
<dbReference type="PANTHER" id="PTHR30005:SF0">
    <property type="entry name" value="RETROGRADE REGULATION PROTEIN 2"/>
    <property type="match status" value="1"/>
</dbReference>
<dbReference type="Pfam" id="PF02541">
    <property type="entry name" value="Ppx-GppA"/>
    <property type="match status" value="1"/>
</dbReference>
<dbReference type="Pfam" id="PF21447">
    <property type="entry name" value="Ppx-GppA_III"/>
    <property type="match status" value="1"/>
</dbReference>
<dbReference type="PIRSF" id="PIRSF001267">
    <property type="entry name" value="Pyrophosphatase_GppA_Ppx"/>
    <property type="match status" value="1"/>
</dbReference>
<dbReference type="SUPFAM" id="SSF53067">
    <property type="entry name" value="Actin-like ATPase domain"/>
    <property type="match status" value="2"/>
</dbReference>
<dbReference type="SUPFAM" id="SSF109604">
    <property type="entry name" value="HD-domain/PDEase-like"/>
    <property type="match status" value="1"/>
</dbReference>
<comment type="function">
    <text evidence="1">Catalyzes the conversion of pppGpp to ppGpp. Guanosine pentaphosphate (pppGpp) is a cytoplasmic signaling molecule which together with ppGpp controls the 'stringent response', an adaptive process that allows bacteria to respond to amino acid starvation, resulting in the coordinated regulation of numerous cellular activities.</text>
</comment>
<comment type="catalytic activity">
    <reaction evidence="1">
        <text>guanosine 3'-diphosphate 5'-triphosphate + H2O = guanosine 3',5'-bis(diphosphate) + phosphate + H(+)</text>
        <dbReference type="Rhea" id="RHEA:13073"/>
        <dbReference type="ChEBI" id="CHEBI:15377"/>
        <dbReference type="ChEBI" id="CHEBI:15378"/>
        <dbReference type="ChEBI" id="CHEBI:43474"/>
        <dbReference type="ChEBI" id="CHEBI:77828"/>
        <dbReference type="ChEBI" id="CHEBI:142410"/>
        <dbReference type="EC" id="3.6.1.40"/>
    </reaction>
</comment>
<comment type="pathway">
    <text evidence="1">Purine metabolism; ppGpp biosynthesis; ppGpp from GTP: step 2/2.</text>
</comment>
<comment type="similarity">
    <text evidence="1">Belongs to the GppA/Ppx family. GppA subfamily.</text>
</comment>
<accession>B6I4B5</accession>
<reference key="1">
    <citation type="journal article" date="2008" name="DNA Res.">
        <title>Complete genome sequence and comparative analysis of the wild-type commensal Escherichia coli strain SE11 isolated from a healthy adult.</title>
        <authorList>
            <person name="Oshima K."/>
            <person name="Toh H."/>
            <person name="Ogura Y."/>
            <person name="Sasamoto H."/>
            <person name="Morita H."/>
            <person name="Park S.-H."/>
            <person name="Ooka T."/>
            <person name="Iyoda S."/>
            <person name="Taylor T.D."/>
            <person name="Hayashi T."/>
            <person name="Itoh K."/>
            <person name="Hattori M."/>
        </authorList>
    </citation>
    <scope>NUCLEOTIDE SEQUENCE [LARGE SCALE GENOMIC DNA]</scope>
    <source>
        <strain>SE11</strain>
    </source>
</reference>
<sequence>MGSTSSLYAAIDLGSNSFHMLVVREVAGSIQTLTRIKRKVRLAAGLNSENALSNEAMERGWQCLRLFAERLQDIPPSQIRVVATATLRLAVNAGDFIAKAQEILGCPVQVISGEEEARLIYQGVAHTTGGADQRLVVDIGGASTELVTGTGAQTTSLFSLSMGCVTWLERYFADRNLGQENFDAAEKAAREVLRPVADELRYHGWKVCVGASGTVQALQEIMMAQGMDERITLEKLQQLKQRAIHCGRLEELEIDGLTLERALVFPSGLAILIAIFTELNIQCMTLAGGALREGLVYGMLHLAVEQDIRSRTLRNIQRRFMIDIDQAQRVAKVAANFFDQVEKEWHLEAISRDLLISACQLHEIGLSVDFKQAPQHAAYLVRNLDLPGFTPAQKKLLATLLLNQTNPVDLSSLHQQNAVPPRVAEQLCRLLRLAIIFASRRRDDLVPEMTLQANHELLTLTLPQGWLTQHPLGKEIIAQESQWQSYVHWPLEVH</sequence>
<protein>
    <recommendedName>
        <fullName evidence="1">Guanosine-5'-triphosphate,3'-diphosphate pyrophosphatase</fullName>
        <ecNumber evidence="1">3.6.1.40</ecNumber>
    </recommendedName>
    <alternativeName>
        <fullName evidence="1">Guanosine pentaphosphate phosphohydrolase</fullName>
    </alternativeName>
    <alternativeName>
        <fullName evidence="1">pppGpp-5'-phosphohydrolase</fullName>
    </alternativeName>
</protein>
<feature type="chain" id="PRO_1000146870" description="Guanosine-5'-triphosphate,3'-diphosphate pyrophosphatase">
    <location>
        <begin position="1"/>
        <end position="494"/>
    </location>
</feature>